<dbReference type="EMBL" id="CU928145">
    <property type="protein sequence ID" value="CAU95929.1"/>
    <property type="molecule type" value="Genomic_DNA"/>
</dbReference>
<dbReference type="RefSeq" id="WP_001091525.1">
    <property type="nucleotide sequence ID" value="NC_011748.1"/>
</dbReference>
<dbReference type="SMR" id="B7L4G5"/>
<dbReference type="KEGG" id="eck:EC55989_0042"/>
<dbReference type="HOGENOM" id="CLU_034178_0_1_6"/>
<dbReference type="UniPathway" id="UPA00117"/>
<dbReference type="Proteomes" id="UP000000746">
    <property type="component" value="Chromosome"/>
</dbReference>
<dbReference type="GO" id="GO:0009055">
    <property type="term" value="F:electron transfer activity"/>
    <property type="evidence" value="ECO:0007669"/>
    <property type="project" value="InterPro"/>
</dbReference>
<dbReference type="GO" id="GO:0050660">
    <property type="term" value="F:flavin adenine dinucleotide binding"/>
    <property type="evidence" value="ECO:0007669"/>
    <property type="project" value="InterPro"/>
</dbReference>
<dbReference type="GO" id="GO:0009437">
    <property type="term" value="P:carnitine metabolic process"/>
    <property type="evidence" value="ECO:0007669"/>
    <property type="project" value="UniProtKB-UniRule"/>
</dbReference>
<dbReference type="GO" id="GO:0033539">
    <property type="term" value="P:fatty acid beta-oxidation using acyl-CoA dehydrogenase"/>
    <property type="evidence" value="ECO:0007669"/>
    <property type="project" value="TreeGrafter"/>
</dbReference>
<dbReference type="FunFam" id="3.40.50.1220:FF:000004">
    <property type="entry name" value="Electron transfer flavoprotein"/>
    <property type="match status" value="1"/>
</dbReference>
<dbReference type="FunFam" id="3.40.50.620:FF:000067">
    <property type="entry name" value="Protein FixB"/>
    <property type="match status" value="1"/>
</dbReference>
<dbReference type="Gene3D" id="3.40.50.620">
    <property type="entry name" value="HUPs"/>
    <property type="match status" value="1"/>
</dbReference>
<dbReference type="Gene3D" id="3.40.50.1220">
    <property type="entry name" value="TPP-binding domain"/>
    <property type="match status" value="1"/>
</dbReference>
<dbReference type="HAMAP" id="MF_01056">
    <property type="entry name" value="FixB"/>
    <property type="match status" value="1"/>
</dbReference>
<dbReference type="InterPro" id="IPR029035">
    <property type="entry name" value="DHS-like_NAD/FAD-binding_dom"/>
</dbReference>
<dbReference type="InterPro" id="IPR014730">
    <property type="entry name" value="ETF_a/b_N"/>
</dbReference>
<dbReference type="InterPro" id="IPR001308">
    <property type="entry name" value="ETF_a/FixB"/>
</dbReference>
<dbReference type="InterPro" id="IPR014731">
    <property type="entry name" value="ETF_asu_C"/>
</dbReference>
<dbReference type="InterPro" id="IPR018206">
    <property type="entry name" value="ETF_asu_C_CS"/>
</dbReference>
<dbReference type="InterPro" id="IPR023461">
    <property type="entry name" value="FixB"/>
</dbReference>
<dbReference type="InterPro" id="IPR014729">
    <property type="entry name" value="Rossmann-like_a/b/a_fold"/>
</dbReference>
<dbReference type="NCBIfam" id="NF002889">
    <property type="entry name" value="PRK03363.1"/>
    <property type="match status" value="1"/>
</dbReference>
<dbReference type="PANTHER" id="PTHR43153">
    <property type="entry name" value="ELECTRON TRANSFER FLAVOPROTEIN ALPHA"/>
    <property type="match status" value="1"/>
</dbReference>
<dbReference type="PANTHER" id="PTHR43153:SF5">
    <property type="entry name" value="PROTEIN FIXB-RELATED"/>
    <property type="match status" value="1"/>
</dbReference>
<dbReference type="Pfam" id="PF01012">
    <property type="entry name" value="ETF"/>
    <property type="match status" value="1"/>
</dbReference>
<dbReference type="Pfam" id="PF00766">
    <property type="entry name" value="ETF_alpha"/>
    <property type="match status" value="1"/>
</dbReference>
<dbReference type="PIRSF" id="PIRSF000089">
    <property type="entry name" value="Electra_flavoP_a"/>
    <property type="match status" value="1"/>
</dbReference>
<dbReference type="SMART" id="SM00893">
    <property type="entry name" value="ETF"/>
    <property type="match status" value="1"/>
</dbReference>
<dbReference type="SUPFAM" id="SSF52402">
    <property type="entry name" value="Adenine nucleotide alpha hydrolases-like"/>
    <property type="match status" value="1"/>
</dbReference>
<dbReference type="SUPFAM" id="SSF52467">
    <property type="entry name" value="DHS-like NAD/FAD-binding domain"/>
    <property type="match status" value="1"/>
</dbReference>
<dbReference type="PROSITE" id="PS00696">
    <property type="entry name" value="ETF_ALPHA"/>
    <property type="match status" value="1"/>
</dbReference>
<reference key="1">
    <citation type="journal article" date="2009" name="PLoS Genet.">
        <title>Organised genome dynamics in the Escherichia coli species results in highly diverse adaptive paths.</title>
        <authorList>
            <person name="Touchon M."/>
            <person name="Hoede C."/>
            <person name="Tenaillon O."/>
            <person name="Barbe V."/>
            <person name="Baeriswyl S."/>
            <person name="Bidet P."/>
            <person name="Bingen E."/>
            <person name="Bonacorsi S."/>
            <person name="Bouchier C."/>
            <person name="Bouvet O."/>
            <person name="Calteau A."/>
            <person name="Chiapello H."/>
            <person name="Clermont O."/>
            <person name="Cruveiller S."/>
            <person name="Danchin A."/>
            <person name="Diard M."/>
            <person name="Dossat C."/>
            <person name="Karoui M.E."/>
            <person name="Frapy E."/>
            <person name="Garry L."/>
            <person name="Ghigo J.M."/>
            <person name="Gilles A.M."/>
            <person name="Johnson J."/>
            <person name="Le Bouguenec C."/>
            <person name="Lescat M."/>
            <person name="Mangenot S."/>
            <person name="Martinez-Jehanne V."/>
            <person name="Matic I."/>
            <person name="Nassif X."/>
            <person name="Oztas S."/>
            <person name="Petit M.A."/>
            <person name="Pichon C."/>
            <person name="Rouy Z."/>
            <person name="Ruf C.S."/>
            <person name="Schneider D."/>
            <person name="Tourret J."/>
            <person name="Vacherie B."/>
            <person name="Vallenet D."/>
            <person name="Medigue C."/>
            <person name="Rocha E.P.C."/>
            <person name="Denamur E."/>
        </authorList>
    </citation>
    <scope>NUCLEOTIDE SEQUENCE [LARGE SCALE GENOMIC DNA]</scope>
    <source>
        <strain>55989 / EAEC</strain>
    </source>
</reference>
<name>FIXB_ECO55</name>
<gene>
    <name evidence="1" type="primary">fixB</name>
    <name type="ordered locus">EC55989_0042</name>
</gene>
<proteinExistence type="inferred from homology"/>
<comment type="function">
    <text evidence="1">Required for anaerobic carnitine reduction. May bring reductant to CaiA.</text>
</comment>
<comment type="pathway">
    <text evidence="1">Amine and polyamine metabolism; carnitine metabolism.</text>
</comment>
<comment type="subunit">
    <text evidence="1">Heterodimer of FixA and FixB.</text>
</comment>
<comment type="similarity">
    <text evidence="1">Belongs to the ETF alpha-subunit/FixB family.</text>
</comment>
<sequence length="313" mass="33555">MNTFSQVWVFSDTPSRLPELMNGAQALANQINTFVLNDADGVQAIQLGANHVWKLNGKPDDRMIEDYAGVMADTIRQHGADGLVLLPNTRRGKLLAAKLGYRLKAAVSNDASTISVQDGKATVKHMVYGGLAIGEERIATPYAVLTISSGTFDAAQPDASRTGETHTVEWQAPAVAITRTATQARQSNSVDLDKARLVVSVGRGIGSKENIALAEQLCKAIGAELACSRPVAENEKWMEHERYVGISNLMLKPELYLAVGISGQIQHMVGANASQTIFAINKDKNAPIFQYADYGIVGDAVKILPALTAALAR</sequence>
<protein>
    <recommendedName>
        <fullName evidence="1">Protein FixB</fullName>
    </recommendedName>
</protein>
<accession>B7L4G5</accession>
<feature type="chain" id="PRO_1000149639" description="Protein FixB">
    <location>
        <begin position="1"/>
        <end position="313"/>
    </location>
</feature>
<feature type="binding site" evidence="1">
    <location>
        <begin position="255"/>
        <end position="283"/>
    </location>
    <ligand>
        <name>FAD</name>
        <dbReference type="ChEBI" id="CHEBI:57692"/>
    </ligand>
</feature>
<organism>
    <name type="scientific">Escherichia coli (strain 55989 / EAEC)</name>
    <dbReference type="NCBI Taxonomy" id="585055"/>
    <lineage>
        <taxon>Bacteria</taxon>
        <taxon>Pseudomonadati</taxon>
        <taxon>Pseudomonadota</taxon>
        <taxon>Gammaproteobacteria</taxon>
        <taxon>Enterobacterales</taxon>
        <taxon>Enterobacteriaceae</taxon>
        <taxon>Escherichia</taxon>
    </lineage>
</organism>
<evidence type="ECO:0000255" key="1">
    <source>
        <dbReference type="HAMAP-Rule" id="MF_01056"/>
    </source>
</evidence>
<keyword id="KW-0249">Electron transport</keyword>
<keyword id="KW-0274">FAD</keyword>
<keyword id="KW-0285">Flavoprotein</keyword>
<keyword id="KW-1185">Reference proteome</keyword>
<keyword id="KW-0813">Transport</keyword>